<accession>Q3IQG6</accession>
<sequence>MDAHITPSTVNGTVRAPPSKSYTHRAILAAGYGDGATVKNPLFSADTRATARAVEAYGGTTEQADDDLEVTGFDGTPGTPKDVINCANSGTTMRLTTATGALVDGLAVLTGDESLRSRPQGPLLDALDQLGARAESTRENGQAPLVVGGDIDGGELAIRGDVSSQYITGLLMAGAVTESGIDIELTTALKSAPYVDITLEVLADFGVDAEVIGGDDSEVRSAGADGFRVDGGQSYAPTDGTYHVPGDFSSMSYLLAAGALAADEEVVVAGAHPSAQGDAAIVSILESMGADIEWNRDDGRITVRQSSLSGVEVGVADTPDLLPTIAVLGAAADGETRITDCEHVRLKETDRVAAMATELERLGVETDEYEDELVVYGGGIDGGTVAGHDDHRIVMSLAVAGLVADGEVTIKNADHVDVSFPSFFETLADLGVGVETGA</sequence>
<evidence type="ECO:0000255" key="1">
    <source>
        <dbReference type="HAMAP-Rule" id="MF_00210"/>
    </source>
</evidence>
<name>AROA_NATPD</name>
<proteinExistence type="inferred from homology"/>
<dbReference type="EC" id="2.5.1.19" evidence="1"/>
<dbReference type="EMBL" id="CR936257">
    <property type="protein sequence ID" value="CAI49630.1"/>
    <property type="molecule type" value="Genomic_DNA"/>
</dbReference>
<dbReference type="RefSeq" id="WP_011323252.1">
    <property type="nucleotide sequence ID" value="NC_007426.1"/>
</dbReference>
<dbReference type="SMR" id="Q3IQG6"/>
<dbReference type="STRING" id="348780.NP_3078A"/>
<dbReference type="EnsemblBacteria" id="CAI49630">
    <property type="protein sequence ID" value="CAI49630"/>
    <property type="gene ID" value="NP_3078A"/>
</dbReference>
<dbReference type="GeneID" id="3702526"/>
<dbReference type="KEGG" id="nph:NP_3078A"/>
<dbReference type="eggNOG" id="arCOG04134">
    <property type="taxonomic scope" value="Archaea"/>
</dbReference>
<dbReference type="HOGENOM" id="CLU_024321_0_0_2"/>
<dbReference type="OrthoDB" id="43788at2157"/>
<dbReference type="UniPathway" id="UPA00053"/>
<dbReference type="Proteomes" id="UP000002698">
    <property type="component" value="Chromosome"/>
</dbReference>
<dbReference type="GO" id="GO:0005737">
    <property type="term" value="C:cytoplasm"/>
    <property type="evidence" value="ECO:0007669"/>
    <property type="project" value="UniProtKB-SubCell"/>
</dbReference>
<dbReference type="GO" id="GO:0003866">
    <property type="term" value="F:3-phosphoshikimate 1-carboxyvinyltransferase activity"/>
    <property type="evidence" value="ECO:0007669"/>
    <property type="project" value="UniProtKB-UniRule"/>
</dbReference>
<dbReference type="GO" id="GO:0008652">
    <property type="term" value="P:amino acid biosynthetic process"/>
    <property type="evidence" value="ECO:0007669"/>
    <property type="project" value="UniProtKB-KW"/>
</dbReference>
<dbReference type="GO" id="GO:0009073">
    <property type="term" value="P:aromatic amino acid family biosynthetic process"/>
    <property type="evidence" value="ECO:0007669"/>
    <property type="project" value="UniProtKB-KW"/>
</dbReference>
<dbReference type="GO" id="GO:0009423">
    <property type="term" value="P:chorismate biosynthetic process"/>
    <property type="evidence" value="ECO:0007669"/>
    <property type="project" value="UniProtKB-UniRule"/>
</dbReference>
<dbReference type="CDD" id="cd01556">
    <property type="entry name" value="EPSP_synthase"/>
    <property type="match status" value="1"/>
</dbReference>
<dbReference type="Gene3D" id="3.65.10.10">
    <property type="entry name" value="Enolpyruvate transferase domain"/>
    <property type="match status" value="2"/>
</dbReference>
<dbReference type="HAMAP" id="MF_00210">
    <property type="entry name" value="EPSP_synth"/>
    <property type="match status" value="1"/>
</dbReference>
<dbReference type="InterPro" id="IPR001986">
    <property type="entry name" value="Enolpyruvate_Tfrase_dom"/>
</dbReference>
<dbReference type="InterPro" id="IPR036968">
    <property type="entry name" value="Enolpyruvate_Tfrase_sf"/>
</dbReference>
<dbReference type="InterPro" id="IPR006264">
    <property type="entry name" value="EPSP_synthase"/>
</dbReference>
<dbReference type="InterPro" id="IPR023193">
    <property type="entry name" value="EPSP_synthase_CS"/>
</dbReference>
<dbReference type="InterPro" id="IPR013792">
    <property type="entry name" value="RNA3'P_cycl/enolpyr_Trfase_a/b"/>
</dbReference>
<dbReference type="NCBIfam" id="TIGR01356">
    <property type="entry name" value="aroA"/>
    <property type="match status" value="1"/>
</dbReference>
<dbReference type="PANTHER" id="PTHR21090">
    <property type="entry name" value="AROM/DEHYDROQUINATE SYNTHASE"/>
    <property type="match status" value="1"/>
</dbReference>
<dbReference type="PANTHER" id="PTHR21090:SF5">
    <property type="entry name" value="PENTAFUNCTIONAL AROM POLYPEPTIDE"/>
    <property type="match status" value="1"/>
</dbReference>
<dbReference type="Pfam" id="PF00275">
    <property type="entry name" value="EPSP_synthase"/>
    <property type="match status" value="1"/>
</dbReference>
<dbReference type="PIRSF" id="PIRSF000505">
    <property type="entry name" value="EPSPS"/>
    <property type="match status" value="1"/>
</dbReference>
<dbReference type="SUPFAM" id="SSF55205">
    <property type="entry name" value="EPT/RTPC-like"/>
    <property type="match status" value="1"/>
</dbReference>
<dbReference type="PROSITE" id="PS00104">
    <property type="entry name" value="EPSP_SYNTHASE_1"/>
    <property type="match status" value="1"/>
</dbReference>
<dbReference type="PROSITE" id="PS00885">
    <property type="entry name" value="EPSP_SYNTHASE_2"/>
    <property type="match status" value="1"/>
</dbReference>
<protein>
    <recommendedName>
        <fullName evidence="1">3-phosphoshikimate 1-carboxyvinyltransferase</fullName>
        <ecNumber evidence="1">2.5.1.19</ecNumber>
    </recommendedName>
    <alternativeName>
        <fullName evidence="1">5-enolpyruvylshikimate-3-phosphate synthase</fullName>
        <shortName evidence="1">EPSP synthase</shortName>
        <shortName evidence="1">EPSPS</shortName>
    </alternativeName>
</protein>
<feature type="chain" id="PRO_1000071738" description="3-phosphoshikimate 1-carboxyvinyltransferase">
    <location>
        <begin position="1"/>
        <end position="438"/>
    </location>
</feature>
<feature type="active site" description="Proton acceptor" evidence="1">
    <location>
        <position position="320"/>
    </location>
</feature>
<feature type="binding site" evidence="1">
    <location>
        <position position="20"/>
    </location>
    <ligand>
        <name>3-phosphoshikimate</name>
        <dbReference type="ChEBI" id="CHEBI:145989"/>
    </ligand>
</feature>
<feature type="binding site" evidence="1">
    <location>
        <position position="20"/>
    </location>
    <ligand>
        <name>phosphoenolpyruvate</name>
        <dbReference type="ChEBI" id="CHEBI:58702"/>
    </ligand>
</feature>
<feature type="binding site" evidence="1">
    <location>
        <position position="21"/>
    </location>
    <ligand>
        <name>3-phosphoshikimate</name>
        <dbReference type="ChEBI" id="CHEBI:145989"/>
    </ligand>
</feature>
<feature type="binding site" evidence="1">
    <location>
        <position position="25"/>
    </location>
    <ligand>
        <name>3-phosphoshikimate</name>
        <dbReference type="ChEBI" id="CHEBI:145989"/>
    </ligand>
</feature>
<feature type="binding site" evidence="1">
    <location>
        <position position="90"/>
    </location>
    <ligand>
        <name>phosphoenolpyruvate</name>
        <dbReference type="ChEBI" id="CHEBI:58702"/>
    </ligand>
</feature>
<feature type="binding site" evidence="1">
    <location>
        <position position="118"/>
    </location>
    <ligand>
        <name>phosphoenolpyruvate</name>
        <dbReference type="ChEBI" id="CHEBI:58702"/>
    </ligand>
</feature>
<feature type="binding site" evidence="1">
    <location>
        <position position="163"/>
    </location>
    <ligand>
        <name>3-phosphoshikimate</name>
        <dbReference type="ChEBI" id="CHEBI:145989"/>
    </ligand>
</feature>
<feature type="binding site" evidence="1">
    <location>
        <position position="164"/>
    </location>
    <ligand>
        <name>3-phosphoshikimate</name>
        <dbReference type="ChEBI" id="CHEBI:145989"/>
    </ligand>
</feature>
<feature type="binding site" evidence="1">
    <location>
        <position position="165"/>
    </location>
    <ligand>
        <name>3-phosphoshikimate</name>
        <dbReference type="ChEBI" id="CHEBI:145989"/>
    </ligand>
</feature>
<feature type="binding site" evidence="1">
    <location>
        <position position="165"/>
    </location>
    <ligand>
        <name>phosphoenolpyruvate</name>
        <dbReference type="ChEBI" id="CHEBI:58702"/>
    </ligand>
</feature>
<feature type="binding site" evidence="1">
    <location>
        <position position="191"/>
    </location>
    <ligand>
        <name>3-phosphoshikimate</name>
        <dbReference type="ChEBI" id="CHEBI:145989"/>
    </ligand>
</feature>
<feature type="binding site" evidence="1">
    <location>
        <position position="320"/>
    </location>
    <ligand>
        <name>3-phosphoshikimate</name>
        <dbReference type="ChEBI" id="CHEBI:145989"/>
    </ligand>
</feature>
<feature type="binding site" evidence="1">
    <location>
        <position position="347"/>
    </location>
    <ligand>
        <name>3-phosphoshikimate</name>
        <dbReference type="ChEBI" id="CHEBI:145989"/>
    </ligand>
</feature>
<feature type="binding site" evidence="1">
    <location>
        <position position="351"/>
    </location>
    <ligand>
        <name>phosphoenolpyruvate</name>
        <dbReference type="ChEBI" id="CHEBI:58702"/>
    </ligand>
</feature>
<feature type="binding site" evidence="1">
    <location>
        <position position="392"/>
    </location>
    <ligand>
        <name>phosphoenolpyruvate</name>
        <dbReference type="ChEBI" id="CHEBI:58702"/>
    </ligand>
</feature>
<comment type="function">
    <text evidence="1">Catalyzes the transfer of the enolpyruvyl moiety of phosphoenolpyruvate (PEP) to the 5-hydroxyl of shikimate-3-phosphate (S3P) to produce enolpyruvyl shikimate-3-phosphate and inorganic phosphate.</text>
</comment>
<comment type="catalytic activity">
    <reaction evidence="1">
        <text>3-phosphoshikimate + phosphoenolpyruvate = 5-O-(1-carboxyvinyl)-3-phosphoshikimate + phosphate</text>
        <dbReference type="Rhea" id="RHEA:21256"/>
        <dbReference type="ChEBI" id="CHEBI:43474"/>
        <dbReference type="ChEBI" id="CHEBI:57701"/>
        <dbReference type="ChEBI" id="CHEBI:58702"/>
        <dbReference type="ChEBI" id="CHEBI:145989"/>
        <dbReference type="EC" id="2.5.1.19"/>
    </reaction>
    <physiologicalReaction direction="left-to-right" evidence="1">
        <dbReference type="Rhea" id="RHEA:21257"/>
    </physiologicalReaction>
</comment>
<comment type="pathway">
    <text evidence="1">Metabolic intermediate biosynthesis; chorismate biosynthesis.</text>
</comment>
<comment type="subunit">
    <text evidence="1">Monomer.</text>
</comment>
<comment type="subcellular location">
    <subcellularLocation>
        <location evidence="1">Cytoplasm</location>
    </subcellularLocation>
</comment>
<comment type="similarity">
    <text evidence="1">Belongs to the EPSP synthase family.</text>
</comment>
<organism>
    <name type="scientific">Natronomonas pharaonis (strain ATCC 35678 / DSM 2160 / CIP 103997 / JCM 8858 / NBRC 14720 / NCIMB 2260 / Gabara)</name>
    <name type="common">Halobacterium pharaonis</name>
    <dbReference type="NCBI Taxonomy" id="348780"/>
    <lineage>
        <taxon>Archaea</taxon>
        <taxon>Methanobacteriati</taxon>
        <taxon>Methanobacteriota</taxon>
        <taxon>Stenosarchaea group</taxon>
        <taxon>Halobacteria</taxon>
        <taxon>Halobacteriales</taxon>
        <taxon>Haloarculaceae</taxon>
        <taxon>Natronomonas</taxon>
    </lineage>
</organism>
<gene>
    <name evidence="1" type="primary">aroA</name>
    <name type="ordered locus">NP_3078A</name>
</gene>
<keyword id="KW-0028">Amino-acid biosynthesis</keyword>
<keyword id="KW-0057">Aromatic amino acid biosynthesis</keyword>
<keyword id="KW-0963">Cytoplasm</keyword>
<keyword id="KW-1185">Reference proteome</keyword>
<keyword id="KW-0808">Transferase</keyword>
<reference key="1">
    <citation type="journal article" date="2005" name="Genome Res.">
        <title>Living with two extremes: conclusions from the genome sequence of Natronomonas pharaonis.</title>
        <authorList>
            <person name="Falb M."/>
            <person name="Pfeiffer F."/>
            <person name="Palm P."/>
            <person name="Rodewald K."/>
            <person name="Hickmann V."/>
            <person name="Tittor J."/>
            <person name="Oesterhelt D."/>
        </authorList>
    </citation>
    <scope>NUCLEOTIDE SEQUENCE [LARGE SCALE GENOMIC DNA]</scope>
    <source>
        <strain>ATCC 35678 / DSM 2160 / CIP 103997 / JCM 8858 / NBRC 14720 / NCIMB 2260 / Gabara</strain>
    </source>
</reference>